<organism>
    <name type="scientific">Streptococcus pyogenes serotype M4 (strain MGAS10750)</name>
    <dbReference type="NCBI Taxonomy" id="370554"/>
    <lineage>
        <taxon>Bacteria</taxon>
        <taxon>Bacillati</taxon>
        <taxon>Bacillota</taxon>
        <taxon>Bacilli</taxon>
        <taxon>Lactobacillales</taxon>
        <taxon>Streptococcaceae</taxon>
        <taxon>Streptococcus</taxon>
    </lineage>
</organism>
<evidence type="ECO:0000255" key="1">
    <source>
        <dbReference type="HAMAP-Rule" id="MF_00621"/>
    </source>
</evidence>
<gene>
    <name evidence="1" type="primary">codY</name>
    <name type="ordered locus">MGAS10750_Spy1572</name>
</gene>
<dbReference type="EMBL" id="CP000262">
    <property type="protein sequence ID" value="ABF38522.1"/>
    <property type="molecule type" value="Genomic_DNA"/>
</dbReference>
<dbReference type="SMR" id="Q1J564"/>
<dbReference type="KEGG" id="spi:MGAS10750_Spy1572"/>
<dbReference type="HOGENOM" id="CLU_089581_0_0_9"/>
<dbReference type="Proteomes" id="UP000002434">
    <property type="component" value="Chromosome"/>
</dbReference>
<dbReference type="GO" id="GO:0005737">
    <property type="term" value="C:cytoplasm"/>
    <property type="evidence" value="ECO:0007669"/>
    <property type="project" value="UniProtKB-SubCell"/>
</dbReference>
<dbReference type="GO" id="GO:0003677">
    <property type="term" value="F:DNA binding"/>
    <property type="evidence" value="ECO:0007669"/>
    <property type="project" value="UniProtKB-UniRule"/>
</dbReference>
<dbReference type="GO" id="GO:0003700">
    <property type="term" value="F:DNA-binding transcription factor activity"/>
    <property type="evidence" value="ECO:0007669"/>
    <property type="project" value="InterPro"/>
</dbReference>
<dbReference type="GO" id="GO:0005525">
    <property type="term" value="F:GTP binding"/>
    <property type="evidence" value="ECO:0007669"/>
    <property type="project" value="InterPro"/>
</dbReference>
<dbReference type="GO" id="GO:0045892">
    <property type="term" value="P:negative regulation of DNA-templated transcription"/>
    <property type="evidence" value="ECO:0007669"/>
    <property type="project" value="UniProtKB-UniRule"/>
</dbReference>
<dbReference type="CDD" id="cd00090">
    <property type="entry name" value="HTH_ARSR"/>
    <property type="match status" value="1"/>
</dbReference>
<dbReference type="FunFam" id="1.10.10.10:FF:000034">
    <property type="entry name" value="GTP-sensing transcriptional pleiotropic repressor CodY"/>
    <property type="match status" value="1"/>
</dbReference>
<dbReference type="FunFam" id="3.30.450.40:FF:000003">
    <property type="entry name" value="GTP-sensing transcriptional pleiotropic repressor CodY"/>
    <property type="match status" value="1"/>
</dbReference>
<dbReference type="Gene3D" id="3.30.450.40">
    <property type="match status" value="1"/>
</dbReference>
<dbReference type="Gene3D" id="1.10.10.10">
    <property type="entry name" value="Winged helix-like DNA-binding domain superfamily/Winged helix DNA-binding domain"/>
    <property type="match status" value="1"/>
</dbReference>
<dbReference type="HAMAP" id="MF_00621">
    <property type="entry name" value="HTH_type_CodY"/>
    <property type="match status" value="1"/>
</dbReference>
<dbReference type="InterPro" id="IPR011991">
    <property type="entry name" value="ArsR-like_HTH"/>
</dbReference>
<dbReference type="InterPro" id="IPR014154">
    <property type="entry name" value="CodY"/>
</dbReference>
<dbReference type="InterPro" id="IPR029016">
    <property type="entry name" value="GAF-like_dom_sf"/>
</dbReference>
<dbReference type="InterPro" id="IPR013198">
    <property type="entry name" value="GTP_trans_reg_CodY_C"/>
</dbReference>
<dbReference type="InterPro" id="IPR010312">
    <property type="entry name" value="Transc_reg_CodY_N"/>
</dbReference>
<dbReference type="InterPro" id="IPR036388">
    <property type="entry name" value="WH-like_DNA-bd_sf"/>
</dbReference>
<dbReference type="InterPro" id="IPR036390">
    <property type="entry name" value="WH_DNA-bd_sf"/>
</dbReference>
<dbReference type="NCBIfam" id="TIGR02787">
    <property type="entry name" value="codY_Gpos"/>
    <property type="match status" value="1"/>
</dbReference>
<dbReference type="NCBIfam" id="NF003170">
    <property type="entry name" value="PRK04158.1"/>
    <property type="match status" value="1"/>
</dbReference>
<dbReference type="PANTHER" id="PTHR40062:SF1">
    <property type="entry name" value="GLOBAL TRANSCRIPTIONAL REGULATOR CODY"/>
    <property type="match status" value="1"/>
</dbReference>
<dbReference type="PANTHER" id="PTHR40062">
    <property type="entry name" value="GTP-SENSING TRANSCRIPTIONAL PLEIOTROPIC REPRESSOR CODY"/>
    <property type="match status" value="1"/>
</dbReference>
<dbReference type="Pfam" id="PF06018">
    <property type="entry name" value="CodY"/>
    <property type="match status" value="1"/>
</dbReference>
<dbReference type="Pfam" id="PF08222">
    <property type="entry name" value="HTH_CodY"/>
    <property type="match status" value="1"/>
</dbReference>
<dbReference type="PIRSF" id="PIRSF011572">
    <property type="entry name" value="GTP_sensing_CodY"/>
    <property type="match status" value="1"/>
</dbReference>
<dbReference type="SUPFAM" id="SSF46785">
    <property type="entry name" value="Winged helix' DNA-binding domain"/>
    <property type="match status" value="1"/>
</dbReference>
<accession>Q1J564</accession>
<name>CODY_STRPF</name>
<comment type="function">
    <text evidence="1">DNA-binding global transcriptional regulator which is involved in the adaptive response to starvation and acts by directly or indirectly controlling the expression of numerous genes in response to nutrient availability. During rapid exponential growth, CodY is highly active and represses genes whose products allow adaptation to nutrient depletion.</text>
</comment>
<comment type="subcellular location">
    <subcellularLocation>
        <location evidence="1">Cytoplasm</location>
    </subcellularLocation>
</comment>
<comment type="similarity">
    <text evidence="1">Belongs to the CodY family.</text>
</comment>
<reference key="1">
    <citation type="journal article" date="2006" name="Proc. Natl. Acad. Sci. U.S.A.">
        <title>Molecular genetic anatomy of inter- and intraserotype variation in the human bacterial pathogen group A Streptococcus.</title>
        <authorList>
            <person name="Beres S.B."/>
            <person name="Richter E.W."/>
            <person name="Nagiec M.J."/>
            <person name="Sumby P."/>
            <person name="Porcella S.F."/>
            <person name="DeLeo F.R."/>
            <person name="Musser J.M."/>
        </authorList>
    </citation>
    <scope>NUCLEOTIDE SEQUENCE [LARGE SCALE GENOMIC DNA]</scope>
    <source>
        <strain>MGAS10750</strain>
    </source>
</reference>
<keyword id="KW-0963">Cytoplasm</keyword>
<keyword id="KW-0238">DNA-binding</keyword>
<keyword id="KW-0678">Repressor</keyword>
<keyword id="KW-0804">Transcription</keyword>
<keyword id="KW-0805">Transcription regulation</keyword>
<protein>
    <recommendedName>
        <fullName evidence="1">Global transcriptional regulator CodY</fullName>
    </recommendedName>
</protein>
<sequence length="260" mass="28635">MPNLLEKTRKITSILQRSVDSLETELPYNTMASRLADIIDCNACIINGGGTLLGYAMKYKTNTDRVEEFFEAKQFPDTYVKAASRVYDTEANLSVENELTIFPVESKDTYPGGLTTIAPIYGGGMRLGSLIIWRNDDEFSDDDLILVEISSTVVGIQLLNLQTENLEDTIRKQTAVNMAINTLSYSEMKAVAAILGELDGNEGRLTASVIADRIGITRSVIVNALRKLESAGIIESRSLGMKGTYLKVINEGIFAKLKEF</sequence>
<proteinExistence type="inferred from homology"/>
<feature type="chain" id="PRO_1000051549" description="Global transcriptional regulator CodY">
    <location>
        <begin position="1"/>
        <end position="260"/>
    </location>
</feature>
<feature type="DNA-binding region" description="H-T-H motif" evidence="1">
    <location>
        <begin position="207"/>
        <end position="226"/>
    </location>
</feature>
<feature type="region of interest" description="GAF domain" evidence="1">
    <location>
        <begin position="1"/>
        <end position="159"/>
    </location>
</feature>